<protein>
    <recommendedName>
        <fullName>Mobilization protein MbeB</fullName>
    </recommendedName>
</protein>
<proteinExistence type="predicted"/>
<sequence>MSNLLQTGAEFEKKLKERAESTEKMLNNEFRRLGESVSEAVTSNETKIRDAIALFTASTEESLEKHREGVKEAMMQHRRDVLKLAGNTGMMLLGIVFLLFTASGGTLWYLGGRIQANLEEIRKQEETLQKLNAKTWGVEFVQDGNRKFLVLPYGKSAEVIPFQGKEWVHLKE</sequence>
<accession>P13659</accession>
<dbReference type="EMBL" id="X15873">
    <property type="protein sequence ID" value="CAA33884.1"/>
    <property type="molecule type" value="Genomic_DNA"/>
</dbReference>
<dbReference type="PIR" id="JQ0391">
    <property type="entry name" value="JQ0391"/>
</dbReference>
<dbReference type="RefSeq" id="NP_040371.1">
    <property type="nucleotide sequence ID" value="NC_001371.1"/>
</dbReference>
<dbReference type="RefSeq" id="WP_000067500.1">
    <property type="nucleotide sequence ID" value="NZ_WVVR01000058.1"/>
</dbReference>
<dbReference type="RefSeq" id="YP_006953573.1">
    <property type="nucleotide sequence ID" value="NC_019076.1"/>
</dbReference>
<dbReference type="RefSeq" id="YP_009062855.1">
    <property type="nucleotide sequence ID" value="NC_025013.1"/>
</dbReference>
<dbReference type="SMR" id="P13659"/>
<dbReference type="InterPro" id="IPR006922">
    <property type="entry name" value="MbeB-like"/>
</dbReference>
<dbReference type="Pfam" id="PF04837">
    <property type="entry name" value="MbeB_N"/>
    <property type="match status" value="1"/>
</dbReference>
<name>MBEB_ECOLX</name>
<gene>
    <name type="primary">mbeB</name>
</gene>
<feature type="chain" id="PRO_0000068401" description="Mobilization protein MbeB">
    <location>
        <begin position="1"/>
        <end position="172"/>
    </location>
</feature>
<reference key="1">
    <citation type="journal article" date="1989" name="Mol. Gen. Genet.">
        <title>Characterization of the ColE1 mobilization region and its protein products.</title>
        <authorList>
            <person name="Boyd A.C."/>
            <person name="Archer J.A.K."/>
            <person name="Sherratt D.J."/>
        </authorList>
    </citation>
    <scope>NUCLEOTIDE SEQUENCE [GENOMIC DNA]</scope>
</reference>
<evidence type="ECO:0000305" key="1"/>
<geneLocation type="plasmid">
    <name>ColE1</name>
</geneLocation>
<organism>
    <name type="scientific">Escherichia coli</name>
    <dbReference type="NCBI Taxonomy" id="562"/>
    <lineage>
        <taxon>Bacteria</taxon>
        <taxon>Pseudomonadati</taxon>
        <taxon>Pseudomonadota</taxon>
        <taxon>Gammaproteobacteria</taxon>
        <taxon>Enterobacterales</taxon>
        <taxon>Enterobacteriaceae</taxon>
        <taxon>Escherichia</taxon>
    </lineage>
</organism>
<comment type="function">
    <text>This protein is essential to promote the specific transfer of the plasmid in the presence of conjugative plasmids.</text>
</comment>
<comment type="subunit">
    <text>Interacts with MbeA and MbeC to form the relaxosome.</text>
</comment>
<comment type="similarity">
    <text evidence="1">To E.coli MbaB and MbkB.</text>
</comment>
<keyword id="KW-0184">Conjugation</keyword>
<keyword id="KW-0499">Mobility protein</keyword>
<keyword id="KW-0614">Plasmid</keyword>